<organism>
    <name type="scientific">Haemophilus influenzae (strain ATCC 51907 / DSM 11121 / KW20 / Rd)</name>
    <dbReference type="NCBI Taxonomy" id="71421"/>
    <lineage>
        <taxon>Bacteria</taxon>
        <taxon>Pseudomonadati</taxon>
        <taxon>Pseudomonadota</taxon>
        <taxon>Gammaproteobacteria</taxon>
        <taxon>Pasteurellales</taxon>
        <taxon>Pasteurellaceae</taxon>
        <taxon>Haemophilus</taxon>
    </lineage>
</organism>
<accession>P44070</accession>
<name>Y902_HAEIN</name>
<feature type="chain" id="PRO_0000077971" description="Probable membrane transporter protein HI_0902">
    <location>
        <begin position="1"/>
        <end position="264"/>
    </location>
</feature>
<feature type="transmembrane region" description="Helical" evidence="1">
    <location>
        <begin position="4"/>
        <end position="24"/>
    </location>
</feature>
<feature type="transmembrane region" description="Helical" evidence="1">
    <location>
        <begin position="28"/>
        <end position="48"/>
    </location>
</feature>
<feature type="transmembrane region" description="Helical" evidence="1">
    <location>
        <begin position="49"/>
        <end position="69"/>
    </location>
</feature>
<feature type="transmembrane region" description="Helical" evidence="1">
    <location>
        <begin position="81"/>
        <end position="101"/>
    </location>
</feature>
<feature type="transmembrane region" description="Helical" evidence="1">
    <location>
        <begin position="107"/>
        <end position="127"/>
    </location>
</feature>
<feature type="transmembrane region" description="Helical" evidence="1">
    <location>
        <begin position="147"/>
        <end position="167"/>
    </location>
</feature>
<feature type="transmembrane region" description="Helical" evidence="1">
    <location>
        <begin position="183"/>
        <end position="203"/>
    </location>
</feature>
<feature type="transmembrane region" description="Helical" evidence="1">
    <location>
        <begin position="210"/>
        <end position="230"/>
    </location>
</feature>
<feature type="transmembrane region" description="Helical" evidence="1">
    <location>
        <begin position="243"/>
        <end position="263"/>
    </location>
</feature>
<gene>
    <name type="ordered locus">HI_0902</name>
</gene>
<evidence type="ECO:0000255" key="1"/>
<evidence type="ECO:0000305" key="2"/>
<reference key="1">
    <citation type="journal article" date="1995" name="Science">
        <title>Whole-genome random sequencing and assembly of Haemophilus influenzae Rd.</title>
        <authorList>
            <person name="Fleischmann R.D."/>
            <person name="Adams M.D."/>
            <person name="White O."/>
            <person name="Clayton R.A."/>
            <person name="Kirkness E.F."/>
            <person name="Kerlavage A.R."/>
            <person name="Bult C.J."/>
            <person name="Tomb J.-F."/>
            <person name="Dougherty B.A."/>
            <person name="Merrick J.M."/>
            <person name="McKenney K."/>
            <person name="Sutton G.G."/>
            <person name="FitzHugh W."/>
            <person name="Fields C.A."/>
            <person name="Gocayne J.D."/>
            <person name="Scott J.D."/>
            <person name="Shirley R."/>
            <person name="Liu L.-I."/>
            <person name="Glodek A."/>
            <person name="Kelley J.M."/>
            <person name="Weidman J.F."/>
            <person name="Phillips C.A."/>
            <person name="Spriggs T."/>
            <person name="Hedblom E."/>
            <person name="Cotton M.D."/>
            <person name="Utterback T.R."/>
            <person name="Hanna M.C."/>
            <person name="Nguyen D.T."/>
            <person name="Saudek D.M."/>
            <person name="Brandon R.C."/>
            <person name="Fine L.D."/>
            <person name="Fritchman J.L."/>
            <person name="Fuhrmann J.L."/>
            <person name="Geoghagen N.S.M."/>
            <person name="Gnehm C.L."/>
            <person name="McDonald L.A."/>
            <person name="Small K.V."/>
            <person name="Fraser C.M."/>
            <person name="Smith H.O."/>
            <person name="Venter J.C."/>
        </authorList>
    </citation>
    <scope>NUCLEOTIDE SEQUENCE [LARGE SCALE GENOMIC DNA]</scope>
    <source>
        <strain>ATCC 51907 / DSM 11121 / KW20 / Rd</strain>
    </source>
</reference>
<dbReference type="EMBL" id="L42023">
    <property type="protein sequence ID" value="AAC22562.1"/>
    <property type="molecule type" value="Genomic_DNA"/>
</dbReference>
<dbReference type="PIR" id="G64015">
    <property type="entry name" value="G64015"/>
</dbReference>
<dbReference type="RefSeq" id="NP_439063.1">
    <property type="nucleotide sequence ID" value="NC_000907.1"/>
</dbReference>
<dbReference type="STRING" id="71421.HI_0902"/>
<dbReference type="EnsemblBacteria" id="AAC22562">
    <property type="protein sequence ID" value="AAC22562"/>
    <property type="gene ID" value="HI_0902"/>
</dbReference>
<dbReference type="KEGG" id="hin:HI_0902"/>
<dbReference type="PATRIC" id="fig|71421.8.peg.944"/>
<dbReference type="eggNOG" id="COG0730">
    <property type="taxonomic scope" value="Bacteria"/>
</dbReference>
<dbReference type="HOGENOM" id="CLU_045498_6_0_6"/>
<dbReference type="OrthoDB" id="457670at2"/>
<dbReference type="PhylomeDB" id="P44070"/>
<dbReference type="BioCyc" id="HINF71421:G1GJ1-942-MONOMER"/>
<dbReference type="Proteomes" id="UP000000579">
    <property type="component" value="Chromosome"/>
</dbReference>
<dbReference type="GO" id="GO:0005886">
    <property type="term" value="C:plasma membrane"/>
    <property type="evidence" value="ECO:0007669"/>
    <property type="project" value="UniProtKB-SubCell"/>
</dbReference>
<dbReference type="InterPro" id="IPR002781">
    <property type="entry name" value="TM_pro_TauE-like"/>
</dbReference>
<dbReference type="PANTHER" id="PTHR43483">
    <property type="entry name" value="MEMBRANE TRANSPORTER PROTEIN HI_0806-RELATED"/>
    <property type="match status" value="1"/>
</dbReference>
<dbReference type="PANTHER" id="PTHR43483:SF3">
    <property type="entry name" value="MEMBRANE TRANSPORTER PROTEIN HI_0806-RELATED"/>
    <property type="match status" value="1"/>
</dbReference>
<dbReference type="Pfam" id="PF01925">
    <property type="entry name" value="TauE"/>
    <property type="match status" value="1"/>
</dbReference>
<proteinExistence type="inferred from homology"/>
<comment type="subcellular location">
    <subcellularLocation>
        <location evidence="2">Cell membrane</location>
        <topology evidence="2">Multi-pass membrane protein</topology>
    </subcellularLocation>
</comment>
<comment type="similarity">
    <text evidence="2">Belongs to the 4-toluene sulfonate uptake permease (TSUP) (TC 2.A.102) family.</text>
</comment>
<keyword id="KW-1003">Cell membrane</keyword>
<keyword id="KW-0472">Membrane</keyword>
<keyword id="KW-1185">Reference proteome</keyword>
<keyword id="KW-0812">Transmembrane</keyword>
<keyword id="KW-1133">Transmembrane helix</keyword>
<keyword id="KW-0813">Transport</keyword>
<sequence length="264" mass="27542">MFTFILLCLLVGALAGFLAGLFGIGGGLVIVPTLVYLLPIVDVPESLLMSTALGTSFATIVITGIGSAQRHHKLGNIVWQAVRILAPVIMLSVFICGLFIGRLDREISAKIFACLVVYLATKMVLSIKKDQVTTKSLTPLSSVIGGILIGMASSAAGIGGGGFIVPFLTARGINIKQAIGSSAFCGMLLGISGMFSFIVSGWGNPLMPEYSLGYIYLPAVLGITATSFFTSKLGASATAKLPVSTLKKGFALFLIVVAINMFLK</sequence>
<protein>
    <recommendedName>
        <fullName>Probable membrane transporter protein HI_0902</fullName>
    </recommendedName>
</protein>